<feature type="signal peptide" evidence="3 4">
    <location>
        <begin position="1"/>
        <end position="15"/>
    </location>
</feature>
<feature type="chain" id="PRO_0000032519" description="Serpin H1">
    <location>
        <begin position="16"/>
        <end position="405"/>
    </location>
</feature>
<feature type="short sequence motif" description="Prevents secretion from ER" evidence="5">
    <location>
        <begin position="402"/>
        <end position="405"/>
    </location>
</feature>
<feature type="site" description="Reactive bond homolog" evidence="1">
    <location>
        <begin position="364"/>
        <end position="365"/>
    </location>
</feature>
<feature type="glycosylation site" description="N-linked (GlcNAc...) asparagine" evidence="2">
    <location>
        <position position="107"/>
    </location>
</feature>
<feature type="glycosylation site" description="N-linked (GlcNAc...) asparagine" evidence="2">
    <location>
        <position position="112"/>
    </location>
</feature>
<protein>
    <recommendedName>
        <fullName>Serpin H1</fullName>
    </recommendedName>
    <alternativeName>
        <fullName>47 kDa heat shock protein</fullName>
    </alternativeName>
    <alternativeName>
        <fullName>Collagen-binding protein</fullName>
        <shortName>Colligin</shortName>
    </alternativeName>
</protein>
<accession>P13731</accession>
<accession>P29042</accession>
<dbReference type="EMBL" id="X57157">
    <property type="protein sequence ID" value="CAA40444.1"/>
    <property type="molecule type" value="mRNA"/>
</dbReference>
<dbReference type="PIR" id="A41252">
    <property type="entry name" value="A41252"/>
</dbReference>
<dbReference type="RefSeq" id="NP_001383901.1">
    <property type="nucleotide sequence ID" value="NM_001396972.1"/>
</dbReference>
<dbReference type="RefSeq" id="NP_990622.1">
    <property type="nucleotide sequence ID" value="NM_205291.2"/>
</dbReference>
<dbReference type="RefSeq" id="XP_015136452.1">
    <property type="nucleotide sequence ID" value="XM_015280966.1"/>
</dbReference>
<dbReference type="RefSeq" id="XP_015136453.1">
    <property type="nucleotide sequence ID" value="XM_015280967.1"/>
</dbReference>
<dbReference type="RefSeq" id="XP_040521691.1">
    <property type="nucleotide sequence ID" value="XM_040665757.2"/>
</dbReference>
<dbReference type="RefSeq" id="XP_046762831.1">
    <property type="nucleotide sequence ID" value="XM_046906875.1"/>
</dbReference>
<dbReference type="SMR" id="P13731"/>
<dbReference type="BioGRID" id="676488">
    <property type="interactions" value="1"/>
</dbReference>
<dbReference type="FunCoup" id="P13731">
    <property type="interactions" value="1659"/>
</dbReference>
<dbReference type="IntAct" id="P13731">
    <property type="interactions" value="1"/>
</dbReference>
<dbReference type="STRING" id="9031.ENSGALP00000018265"/>
<dbReference type="MEROPS" id="I04.035"/>
<dbReference type="GlyCosmos" id="P13731">
    <property type="glycosylation" value="2 sites, No reported glycans"/>
</dbReference>
<dbReference type="GlyGen" id="P13731">
    <property type="glycosylation" value="2 sites"/>
</dbReference>
<dbReference type="PaxDb" id="9031-ENSGALP00000018265"/>
<dbReference type="Ensembl" id="ENSGALT00010006788.1">
    <property type="protein sequence ID" value="ENSGALP00010004137.1"/>
    <property type="gene ID" value="ENSGALG00010002923.1"/>
</dbReference>
<dbReference type="GeneID" id="396228"/>
<dbReference type="KEGG" id="gga:396228"/>
<dbReference type="CTD" id="871"/>
<dbReference type="VEuPathDB" id="HostDB:geneid_396228"/>
<dbReference type="eggNOG" id="KOG2392">
    <property type="taxonomic scope" value="Eukaryota"/>
</dbReference>
<dbReference type="GeneTree" id="ENSGT00940000156163"/>
<dbReference type="HOGENOM" id="CLU_023330_2_0_1"/>
<dbReference type="InParanoid" id="P13731"/>
<dbReference type="OMA" id="WDEKFHE"/>
<dbReference type="OrthoDB" id="671595at2759"/>
<dbReference type="PhylomeDB" id="P13731"/>
<dbReference type="TreeFam" id="TF343094"/>
<dbReference type="Reactome" id="R-GGA-1650814">
    <property type="pathway name" value="Collagen biosynthesis and modifying enzymes"/>
</dbReference>
<dbReference type="PRO" id="PR:P13731"/>
<dbReference type="Proteomes" id="UP000000539">
    <property type="component" value="Chromosome 1"/>
</dbReference>
<dbReference type="Bgee" id="ENSGALG00000011214">
    <property type="expression patterns" value="Expressed in lung and 11 other cell types or tissues"/>
</dbReference>
<dbReference type="GO" id="GO:0005783">
    <property type="term" value="C:endoplasmic reticulum"/>
    <property type="evidence" value="ECO:0000318"/>
    <property type="project" value="GO_Central"/>
</dbReference>
<dbReference type="GO" id="GO:0005788">
    <property type="term" value="C:endoplasmic reticulum lumen"/>
    <property type="evidence" value="ECO:0007669"/>
    <property type="project" value="UniProtKB-SubCell"/>
</dbReference>
<dbReference type="GO" id="GO:0005615">
    <property type="term" value="C:extracellular space"/>
    <property type="evidence" value="ECO:0007669"/>
    <property type="project" value="InterPro"/>
</dbReference>
<dbReference type="GO" id="GO:0005518">
    <property type="term" value="F:collagen binding"/>
    <property type="evidence" value="ECO:0007669"/>
    <property type="project" value="InterPro"/>
</dbReference>
<dbReference type="GO" id="GO:0004867">
    <property type="term" value="F:serine-type endopeptidase inhibitor activity"/>
    <property type="evidence" value="ECO:0000318"/>
    <property type="project" value="GO_Central"/>
</dbReference>
<dbReference type="GO" id="GO:0030199">
    <property type="term" value="P:collagen fibril organization"/>
    <property type="evidence" value="ECO:0000318"/>
    <property type="project" value="GO_Central"/>
</dbReference>
<dbReference type="CDD" id="cd02046">
    <property type="entry name" value="serpinH1_CBP1"/>
    <property type="match status" value="1"/>
</dbReference>
<dbReference type="FunFam" id="2.30.39.10:FF:000004">
    <property type="entry name" value="Serpin peptidase inhibitor, clade H, member 1"/>
    <property type="match status" value="1"/>
</dbReference>
<dbReference type="FunFam" id="3.30.497.10:FF:000034">
    <property type="entry name" value="SERPINH1 isoform 13"/>
    <property type="match status" value="1"/>
</dbReference>
<dbReference type="Gene3D" id="2.30.39.10">
    <property type="entry name" value="Alpha-1-antitrypsin, domain 1"/>
    <property type="match status" value="1"/>
</dbReference>
<dbReference type="Gene3D" id="3.30.497.10">
    <property type="entry name" value="Antithrombin, subunit I, domain 2"/>
    <property type="match status" value="1"/>
</dbReference>
<dbReference type="InterPro" id="IPR023795">
    <property type="entry name" value="Serpin_CS"/>
</dbReference>
<dbReference type="InterPro" id="IPR023796">
    <property type="entry name" value="Serpin_dom"/>
</dbReference>
<dbReference type="InterPro" id="IPR000215">
    <property type="entry name" value="Serpin_fam"/>
</dbReference>
<dbReference type="InterPro" id="IPR033830">
    <property type="entry name" value="Serpin_H1_serpin_dom"/>
</dbReference>
<dbReference type="InterPro" id="IPR036186">
    <property type="entry name" value="Serpin_sf"/>
</dbReference>
<dbReference type="InterPro" id="IPR042178">
    <property type="entry name" value="Serpin_sf_1"/>
</dbReference>
<dbReference type="InterPro" id="IPR042185">
    <property type="entry name" value="Serpin_sf_2"/>
</dbReference>
<dbReference type="PANTHER" id="PTHR11461">
    <property type="entry name" value="SERINE PROTEASE INHIBITOR, SERPIN"/>
    <property type="match status" value="1"/>
</dbReference>
<dbReference type="PANTHER" id="PTHR11461:SF27">
    <property type="entry name" value="SERPIN H1"/>
    <property type="match status" value="1"/>
</dbReference>
<dbReference type="Pfam" id="PF00079">
    <property type="entry name" value="Serpin"/>
    <property type="match status" value="1"/>
</dbReference>
<dbReference type="SMART" id="SM00093">
    <property type="entry name" value="SERPIN"/>
    <property type="match status" value="1"/>
</dbReference>
<dbReference type="SUPFAM" id="SSF56574">
    <property type="entry name" value="Serpins"/>
    <property type="match status" value="1"/>
</dbReference>
<dbReference type="PROSITE" id="PS00014">
    <property type="entry name" value="ER_TARGET"/>
    <property type="match status" value="1"/>
</dbReference>
<dbReference type="PROSITE" id="PS00284">
    <property type="entry name" value="SERPIN"/>
    <property type="match status" value="1"/>
</dbReference>
<organism>
    <name type="scientific">Gallus gallus</name>
    <name type="common">Chicken</name>
    <dbReference type="NCBI Taxonomy" id="9031"/>
    <lineage>
        <taxon>Eukaryota</taxon>
        <taxon>Metazoa</taxon>
        <taxon>Chordata</taxon>
        <taxon>Craniata</taxon>
        <taxon>Vertebrata</taxon>
        <taxon>Euteleostomi</taxon>
        <taxon>Archelosauria</taxon>
        <taxon>Archosauria</taxon>
        <taxon>Dinosauria</taxon>
        <taxon>Saurischia</taxon>
        <taxon>Theropoda</taxon>
        <taxon>Coelurosauria</taxon>
        <taxon>Aves</taxon>
        <taxon>Neognathae</taxon>
        <taxon>Galloanserae</taxon>
        <taxon>Galliformes</taxon>
        <taxon>Phasianidae</taxon>
        <taxon>Phasianinae</taxon>
        <taxon>Gallus</taxon>
    </lineage>
</organism>
<keyword id="KW-0143">Chaperone</keyword>
<keyword id="KW-0903">Direct protein sequencing</keyword>
<keyword id="KW-0256">Endoplasmic reticulum</keyword>
<keyword id="KW-0325">Glycoprotein</keyword>
<keyword id="KW-1185">Reference proteome</keyword>
<keyword id="KW-0732">Signal</keyword>
<keyword id="KW-0346">Stress response</keyword>
<reference key="1">
    <citation type="journal article" date="1991" name="Mol. Cell. Biol.">
        <title>HSP47: a tissue-specific, transformation-sensitive, collagen-binding heat shock protein of chicken embryo fibroblasts.</title>
        <authorList>
            <person name="Hirayoshi K."/>
            <person name="Kudo H."/>
            <person name="Takeuchi H."/>
            <person name="Nakai A."/>
            <person name="Iwamatsu A."/>
            <person name="Yamada K.M."/>
            <person name="Nagata K."/>
        </authorList>
    </citation>
    <scope>NUCLEOTIDE SEQUENCE [MRNA]</scope>
    <scope>PROTEIN SEQUENCE OF 16-51; 117-134 AND 159-177</scope>
    <source>
        <tissue>Fibroblast</tissue>
    </source>
</reference>
<reference key="2">
    <citation type="journal article" date="1988" name="Biochem. Biophys. Res. Commun.">
        <title>Characterization of a novel transformation-sensitive heat-shock protein (HSP47) that binds to collagen.</title>
        <authorList>
            <person name="Nagata K."/>
            <person name="Saga S."/>
            <person name="Yamada K.M."/>
        </authorList>
    </citation>
    <scope>PROTEIN SEQUENCE OF 16-51</scope>
</reference>
<comment type="function">
    <text>Binds specifically to collagen. Could be involved as a chaperone in the biosynthetic pathway of collagen.</text>
</comment>
<comment type="subcellular location">
    <subcellularLocation>
        <location>Endoplasmic reticulum lumen</location>
    </subcellularLocation>
</comment>
<comment type="induction">
    <text>By heat shock.</text>
</comment>
<comment type="similarity">
    <text evidence="5">Belongs to the serpin family.</text>
</comment>
<proteinExistence type="evidence at protein level"/>
<sequence>MQIFLVLALCGLAAAVPSEDRKLSDKATTLADRSTTLAFNLYHAMAKDKNMENILLSPVVVASSLGLVSLGGKATTASQAKAVLSADKLNDDYVHSGLSELLNEVSNSTARNVTWKIGNRLYGPASINFADDFVKNSKKHYNYEHSKINFRDKRSALKSINEWAAQTTDGKLPEVTKDVEKTDGALIVNAMFFKPHWDEKFHHKMVDNRGFMVTRSYTVGVPMMHRTGLYNYYDDEAEKLQVVEMPLAHKLSSMIFIMPNHVEPLERVEKLLNREQLKTWASKMKKRSVAISLPKVVLEVSHDLQKHLADLGLTEAIDKTKADLSKISGKKDLYLSNVFHAAALEWDTDGNPYDADIYGREEMRNPKLFYADHPFIFMIKDSKTNSILFIGRLVRPKGDKMRDEL</sequence>
<gene>
    <name type="primary">SERPINH1</name>
    <name type="synonym">HSP47</name>
</gene>
<evidence type="ECO:0000250" key="1"/>
<evidence type="ECO:0000255" key="2"/>
<evidence type="ECO:0000269" key="3">
    <source>
    </source>
</evidence>
<evidence type="ECO:0000269" key="4">
    <source>
    </source>
</evidence>
<evidence type="ECO:0000305" key="5"/>
<name>SERPH_CHICK</name>